<name>CHM1A_MOUSE</name>
<dbReference type="EMBL" id="AK046416">
    <property type="protein sequence ID" value="BAC32719.1"/>
    <property type="molecule type" value="mRNA"/>
</dbReference>
<dbReference type="EMBL" id="AK159830">
    <property type="protein sequence ID" value="BAE35409.1"/>
    <property type="molecule type" value="mRNA"/>
</dbReference>
<dbReference type="EMBL" id="BC010524">
    <property type="protein sequence ID" value="AAH10524.1"/>
    <property type="molecule type" value="mRNA"/>
</dbReference>
<dbReference type="EMBL" id="BC023807">
    <property type="protein sequence ID" value="AAH23807.1"/>
    <property type="molecule type" value="mRNA"/>
</dbReference>
<dbReference type="EMBL" id="BC036138">
    <property type="protein sequence ID" value="AAH36138.1"/>
    <property type="molecule type" value="mRNA"/>
</dbReference>
<dbReference type="EMBL" id="BC036152">
    <property type="protein sequence ID" value="AAH36152.1"/>
    <property type="molecule type" value="mRNA"/>
</dbReference>
<dbReference type="CCDS" id="CCDS40509.1"/>
<dbReference type="RefSeq" id="NP_663581.1">
    <property type="nucleotide sequence ID" value="NM_145606.3"/>
</dbReference>
<dbReference type="SMR" id="Q921W0"/>
<dbReference type="BioGRID" id="231588">
    <property type="interactions" value="9"/>
</dbReference>
<dbReference type="ComplexPortal" id="CPX-332">
    <property type="entry name" value="ESCRT-III complex, variant Chmp1b1"/>
</dbReference>
<dbReference type="ComplexPortal" id="CPX-333">
    <property type="entry name" value="ESCRT-III complex, variant Chmp1b2"/>
</dbReference>
<dbReference type="FunCoup" id="Q921W0">
    <property type="interactions" value="2181"/>
</dbReference>
<dbReference type="STRING" id="10090.ENSMUSP00000000759"/>
<dbReference type="iPTMnet" id="Q921W0"/>
<dbReference type="PhosphoSitePlus" id="Q921W0"/>
<dbReference type="jPOST" id="Q921W0"/>
<dbReference type="PaxDb" id="10090-ENSMUSP00000000759"/>
<dbReference type="PeptideAtlas" id="Q921W0"/>
<dbReference type="ProteomicsDB" id="281213"/>
<dbReference type="Pumba" id="Q921W0"/>
<dbReference type="DNASU" id="234852"/>
<dbReference type="Ensembl" id="ENSMUST00000000759.9">
    <property type="protein sequence ID" value="ENSMUSP00000000759.9"/>
    <property type="gene ID" value="ENSMUSG00000000743.10"/>
</dbReference>
<dbReference type="GeneID" id="234852"/>
<dbReference type="KEGG" id="mmu:234852"/>
<dbReference type="UCSC" id="uc009nuk.2">
    <property type="organism name" value="mouse"/>
</dbReference>
<dbReference type="AGR" id="MGI:1920159"/>
<dbReference type="CTD" id="5119"/>
<dbReference type="MGI" id="MGI:1920159">
    <property type="gene designation" value="Chmp1a"/>
</dbReference>
<dbReference type="VEuPathDB" id="HostDB:ENSMUSG00000000743"/>
<dbReference type="eggNOG" id="KOG3232">
    <property type="taxonomic scope" value="Eukaryota"/>
</dbReference>
<dbReference type="GeneTree" id="ENSGT00950000182832"/>
<dbReference type="HOGENOM" id="CLU_080826_1_0_1"/>
<dbReference type="InParanoid" id="Q921W0"/>
<dbReference type="OMA" id="DMIFQLR"/>
<dbReference type="OrthoDB" id="10266568at2759"/>
<dbReference type="PhylomeDB" id="Q921W0"/>
<dbReference type="TreeFam" id="TF300076"/>
<dbReference type="BioGRID-ORCS" id="234852">
    <property type="hits" value="7 hits in 77 CRISPR screens"/>
</dbReference>
<dbReference type="CD-CODE" id="CE726F99">
    <property type="entry name" value="Postsynaptic density"/>
</dbReference>
<dbReference type="ChiTaRS" id="Chmp1a">
    <property type="organism name" value="mouse"/>
</dbReference>
<dbReference type="PRO" id="PR:Q921W0"/>
<dbReference type="Proteomes" id="UP000000589">
    <property type="component" value="Chromosome 8"/>
</dbReference>
<dbReference type="RNAct" id="Q921W0">
    <property type="molecule type" value="protein"/>
</dbReference>
<dbReference type="Bgee" id="ENSMUSG00000000743">
    <property type="expression patterns" value="Expressed in dorsal pancreas and 257 other cell types or tissues"/>
</dbReference>
<dbReference type="GO" id="GO:1904930">
    <property type="term" value="C:amphisome membrane"/>
    <property type="evidence" value="ECO:0000266"/>
    <property type="project" value="ComplexPortal"/>
</dbReference>
<dbReference type="GO" id="GO:0000421">
    <property type="term" value="C:autophagosome membrane"/>
    <property type="evidence" value="ECO:0000266"/>
    <property type="project" value="ComplexPortal"/>
</dbReference>
<dbReference type="GO" id="GO:0000794">
    <property type="term" value="C:condensed nuclear chromosome"/>
    <property type="evidence" value="ECO:0000250"/>
    <property type="project" value="UniProtKB"/>
</dbReference>
<dbReference type="GO" id="GO:0005769">
    <property type="term" value="C:early endosome"/>
    <property type="evidence" value="ECO:0000250"/>
    <property type="project" value="UniProtKB"/>
</dbReference>
<dbReference type="GO" id="GO:0012505">
    <property type="term" value="C:endomembrane system"/>
    <property type="evidence" value="ECO:0000250"/>
    <property type="project" value="UniProtKB"/>
</dbReference>
<dbReference type="GO" id="GO:0000776">
    <property type="term" value="C:kinetochore"/>
    <property type="evidence" value="ECO:0000266"/>
    <property type="project" value="ComplexPortal"/>
</dbReference>
<dbReference type="GO" id="GO:0005828">
    <property type="term" value="C:kinetochore microtubule"/>
    <property type="evidence" value="ECO:0000266"/>
    <property type="project" value="ComplexPortal"/>
</dbReference>
<dbReference type="GO" id="GO:0005765">
    <property type="term" value="C:lysosomal membrane"/>
    <property type="evidence" value="ECO:0000266"/>
    <property type="project" value="ComplexPortal"/>
</dbReference>
<dbReference type="GO" id="GO:0005815">
    <property type="term" value="C:microtubule organizing center"/>
    <property type="evidence" value="ECO:0000250"/>
    <property type="project" value="UniProtKB"/>
</dbReference>
<dbReference type="GO" id="GO:0030496">
    <property type="term" value="C:midbody"/>
    <property type="evidence" value="ECO:0000266"/>
    <property type="project" value="ComplexPortal"/>
</dbReference>
<dbReference type="GO" id="GO:0032585">
    <property type="term" value="C:multivesicular body membrane"/>
    <property type="evidence" value="ECO:0000266"/>
    <property type="project" value="ComplexPortal"/>
</dbReference>
<dbReference type="GO" id="GO:0016363">
    <property type="term" value="C:nuclear matrix"/>
    <property type="evidence" value="ECO:0000250"/>
    <property type="project" value="UniProtKB"/>
</dbReference>
<dbReference type="GO" id="GO:0005643">
    <property type="term" value="C:nuclear pore"/>
    <property type="evidence" value="ECO:0000266"/>
    <property type="project" value="ComplexPortal"/>
</dbReference>
<dbReference type="GO" id="GO:0005886">
    <property type="term" value="C:plasma membrane"/>
    <property type="evidence" value="ECO:0000266"/>
    <property type="project" value="ComplexPortal"/>
</dbReference>
<dbReference type="GO" id="GO:0019904">
    <property type="term" value="F:protein domain specific binding"/>
    <property type="evidence" value="ECO:0007669"/>
    <property type="project" value="Ensembl"/>
</dbReference>
<dbReference type="GO" id="GO:0042803">
    <property type="term" value="F:protein homodimerization activity"/>
    <property type="evidence" value="ECO:0007669"/>
    <property type="project" value="Ensembl"/>
</dbReference>
<dbReference type="GO" id="GO:0097352">
    <property type="term" value="P:autophagosome maturation"/>
    <property type="evidence" value="ECO:0000266"/>
    <property type="project" value="ComplexPortal"/>
</dbReference>
<dbReference type="GO" id="GO:0006914">
    <property type="term" value="P:autophagy"/>
    <property type="evidence" value="ECO:0000266"/>
    <property type="project" value="ComplexPortal"/>
</dbReference>
<dbReference type="GO" id="GO:1902774">
    <property type="term" value="P:late endosome to lysosome transport"/>
    <property type="evidence" value="ECO:0000266"/>
    <property type="project" value="ComplexPortal"/>
</dbReference>
<dbReference type="GO" id="GO:0090148">
    <property type="term" value="P:membrane fission"/>
    <property type="evidence" value="ECO:0000303"/>
    <property type="project" value="ComplexPortal"/>
</dbReference>
<dbReference type="GO" id="GO:0061952">
    <property type="term" value="P:midbody abscission"/>
    <property type="evidence" value="ECO:0000266"/>
    <property type="project" value="ComplexPortal"/>
</dbReference>
<dbReference type="GO" id="GO:0007076">
    <property type="term" value="P:mitotic chromosome condensation"/>
    <property type="evidence" value="ECO:0000250"/>
    <property type="project" value="UniProtKB"/>
</dbReference>
<dbReference type="GO" id="GO:0007080">
    <property type="term" value="P:mitotic metaphase chromosome alignment"/>
    <property type="evidence" value="ECO:0000266"/>
    <property type="project" value="ComplexPortal"/>
</dbReference>
<dbReference type="GO" id="GO:0036258">
    <property type="term" value="P:multivesicular body assembly"/>
    <property type="evidence" value="ECO:0000303"/>
    <property type="project" value="ComplexPortal"/>
</dbReference>
<dbReference type="GO" id="GO:0071985">
    <property type="term" value="P:multivesicular body sorting pathway"/>
    <property type="evidence" value="ECO:0000266"/>
    <property type="project" value="ComplexPortal"/>
</dbReference>
<dbReference type="GO" id="GO:0061763">
    <property type="term" value="P:multivesicular body-lysosome fusion"/>
    <property type="evidence" value="ECO:0000303"/>
    <property type="project" value="ComplexPortal"/>
</dbReference>
<dbReference type="GO" id="GO:0010629">
    <property type="term" value="P:negative regulation of gene expression"/>
    <property type="evidence" value="ECO:0000250"/>
    <property type="project" value="UniProtKB"/>
</dbReference>
<dbReference type="GO" id="GO:0031468">
    <property type="term" value="P:nuclear membrane reassembly"/>
    <property type="evidence" value="ECO:0000266"/>
    <property type="project" value="ComplexPortal"/>
</dbReference>
<dbReference type="GO" id="GO:0006997">
    <property type="term" value="P:nucleus organization"/>
    <property type="evidence" value="ECO:0000266"/>
    <property type="project" value="ComplexPortal"/>
</dbReference>
<dbReference type="GO" id="GO:0001778">
    <property type="term" value="P:plasma membrane repair"/>
    <property type="evidence" value="ECO:0000266"/>
    <property type="project" value="ComplexPortal"/>
</dbReference>
<dbReference type="GO" id="GO:0015031">
    <property type="term" value="P:protein transport"/>
    <property type="evidence" value="ECO:0007669"/>
    <property type="project" value="UniProtKB-KW"/>
</dbReference>
<dbReference type="GO" id="GO:0010824">
    <property type="term" value="P:regulation of centrosome duplication"/>
    <property type="evidence" value="ECO:0007669"/>
    <property type="project" value="Ensembl"/>
</dbReference>
<dbReference type="GO" id="GO:1901673">
    <property type="term" value="P:regulation of mitotic spindle assembly"/>
    <property type="evidence" value="ECO:0000266"/>
    <property type="project" value="ComplexPortal"/>
</dbReference>
<dbReference type="GO" id="GO:0043162">
    <property type="term" value="P:ubiquitin-dependent protein catabolic process via the multivesicular body sorting pathway"/>
    <property type="evidence" value="ECO:0000266"/>
    <property type="project" value="ComplexPortal"/>
</dbReference>
<dbReference type="GO" id="GO:0051469">
    <property type="term" value="P:vesicle fusion with vacuole"/>
    <property type="evidence" value="ECO:0000303"/>
    <property type="project" value="ComplexPortal"/>
</dbReference>
<dbReference type="GO" id="GO:0046761">
    <property type="term" value="P:viral budding from plasma membrane"/>
    <property type="evidence" value="ECO:0000266"/>
    <property type="project" value="ComplexPortal"/>
</dbReference>
<dbReference type="GO" id="GO:0039702">
    <property type="term" value="P:viral budding via host ESCRT complex"/>
    <property type="evidence" value="ECO:0000266"/>
    <property type="project" value="ComplexPortal"/>
</dbReference>
<dbReference type="Gene3D" id="6.10.140.1230">
    <property type="match status" value="1"/>
</dbReference>
<dbReference type="InterPro" id="IPR005024">
    <property type="entry name" value="Snf7_fam"/>
</dbReference>
<dbReference type="PANTHER" id="PTHR10476">
    <property type="entry name" value="CHARGED MULTIVESICULAR BODY PROTEIN"/>
    <property type="match status" value="1"/>
</dbReference>
<dbReference type="Pfam" id="PF03357">
    <property type="entry name" value="Snf7"/>
    <property type="match status" value="1"/>
</dbReference>
<organism>
    <name type="scientific">Mus musculus</name>
    <name type="common">Mouse</name>
    <dbReference type="NCBI Taxonomy" id="10090"/>
    <lineage>
        <taxon>Eukaryota</taxon>
        <taxon>Metazoa</taxon>
        <taxon>Chordata</taxon>
        <taxon>Craniata</taxon>
        <taxon>Vertebrata</taxon>
        <taxon>Euteleostomi</taxon>
        <taxon>Mammalia</taxon>
        <taxon>Eutheria</taxon>
        <taxon>Euarchontoglires</taxon>
        <taxon>Glires</taxon>
        <taxon>Rodentia</taxon>
        <taxon>Myomorpha</taxon>
        <taxon>Muroidea</taxon>
        <taxon>Muridae</taxon>
        <taxon>Murinae</taxon>
        <taxon>Mus</taxon>
        <taxon>Mus</taxon>
    </lineage>
</organism>
<evidence type="ECO:0000250" key="1"/>
<evidence type="ECO:0000250" key="2">
    <source>
        <dbReference type="UniProtKB" id="Q9HD42"/>
    </source>
</evidence>
<evidence type="ECO:0000255" key="3"/>
<evidence type="ECO:0000269" key="4">
    <source>
    </source>
</evidence>
<evidence type="ECO:0000305" key="5"/>
<evidence type="ECO:0000312" key="6">
    <source>
        <dbReference type="EMBL" id="AAH10524.1"/>
    </source>
</evidence>
<evidence type="ECO:0000312" key="7">
    <source>
        <dbReference type="EMBL" id="AAH23807.1"/>
    </source>
</evidence>
<evidence type="ECO:0000312" key="8">
    <source>
        <dbReference type="EMBL" id="AAH36138.1"/>
    </source>
</evidence>
<protein>
    <recommendedName>
        <fullName>Charged multivesicular body protein 1a</fullName>
    </recommendedName>
    <alternativeName>
        <fullName>Chromatin-modifying protein 1a</fullName>
        <shortName>CHMP1a</shortName>
    </alternativeName>
</protein>
<comment type="function">
    <text evidence="1">Probable peripherally associated component of the endosomal sorting required for transport complex III (ESCRT-III) which is involved in multivesicular bodies (MVBs) formation and sorting of endosomal cargo proteins into MVBs. MVBs contain intraluminal vesicles (ILVs) that are generated by invagination and scission from the limiting membrane of the endosome and mostly are delivered to lysosomes enabling degradation of membrane proteins, such as stimulated growth factor receptors, lysosomal enzymes and lipids. The MVB pathway appears to require the sequential function of ESCRT-O, -I,-II and -III complexes. ESCRT-III proteins mostly dissociate from the invaginating membrane before the ILV is released. The ESCRT machinery also functions in topologically equivalent membrane fission events, such as the terminal stages of cytokinesis. ESCRT-III proteins are believed to mediate the necessary vesicle extrusion and/or membrane fission activities, possibly in conjunction with the AAA ATPase VPS4. Involved in cytokinesis. Involved in recruiting VPS4A and/or VPS4B to the midbody of dividing cells. May also be involved in chromosome condensation. Targets the Polycomb group (PcG) protein BMI1/PCGF4 to regions of condensed chromatin. May play a role in stable cell cycle progression and in PcG gene silencing (By similarity).</text>
</comment>
<comment type="subunit">
    <text evidence="1">Probable peripherally associated component of the endosomal sorting required for transport complex III (ESCRT-III). ESCRT-III components are thought to multimerize to form a flat lattice on the perimeter membrane of the endosome. Several assembly forms of ESCRT-III may exist that interact and act sequentially. Self-associates. Interacts with CHMP1B. Interacts with VPS4A. Interacts with VPS4B. Interacts with PHF1. Interacts with IST1. Interacts with MITD1 (By similarity).</text>
</comment>
<comment type="subcellular location">
    <subcellularLocation>
        <location evidence="4">Cytoplasm</location>
    </subcellularLocation>
    <subcellularLocation>
        <location evidence="4">Endosome membrane</location>
        <topology evidence="4">Peripheral membrane protein</topology>
    </subcellularLocation>
    <subcellularLocation>
        <location evidence="4">Nucleus matrix</location>
    </subcellularLocation>
    <text>The cytoplasmic form is partially membrane-associated and localizes to early endosomes. The nuclear form remains associated with the chromosome scaffold during mitosis. On overexpression, it localizes to nuclear bodies characterized by nuclease-resistant condensed chromatin.</text>
</comment>
<comment type="tissue specificity">
    <text evidence="4">Highly expressed in adult heart, kidney and liver. Expressed at lower levels in adult colon, spleen, lung, brain, testis and muscle. Also expressed in myoblasts and embryo fibroblasts.</text>
</comment>
<comment type="similarity">
    <text evidence="3">Belongs to the SNF7 family.</text>
</comment>
<keyword id="KW-0007">Acetylation</keyword>
<keyword id="KW-0131">Cell cycle</keyword>
<keyword id="KW-0132">Cell division</keyword>
<keyword id="KW-0175">Coiled coil</keyword>
<keyword id="KW-0963">Cytoplasm</keyword>
<keyword id="KW-0967">Endosome</keyword>
<keyword id="KW-0472">Membrane</keyword>
<keyword id="KW-0539">Nucleus</keyword>
<keyword id="KW-0597">Phosphoprotein</keyword>
<keyword id="KW-0653">Protein transport</keyword>
<keyword id="KW-1185">Reference proteome</keyword>
<keyword id="KW-0678">Repressor</keyword>
<keyword id="KW-0804">Transcription</keyword>
<keyword id="KW-0805">Transcription regulation</keyword>
<keyword id="KW-0813">Transport</keyword>
<sequence length="196" mass="21608">MDDTLFQLKFTAKQLEKLAKKAEKDSKAEQAKVKKALQQKNVECARVYAENAIRKKNEGVNWLRMASRVDAVASKVQTAVTMKGVTKNMAQVTKALDKALSAMDLQKVSAVMDRFEQQVQNLDVHTSVMEDSVSSATTLTTPQEQVDSLIVQIAEENGLEVLDQLSQLPEGASAVGESSVRSQEDQLSRRLAALRN</sequence>
<gene>
    <name type="primary">Chmp1a</name>
    <name evidence="2" type="synonym">Chmp1</name>
    <name type="synonym">Pcoln3</name>
</gene>
<proteinExistence type="evidence at protein level"/>
<accession>Q921W0</accession>
<accession>Q3TW57</accession>
<reference key="1">
    <citation type="journal article" date="2005" name="Science">
        <title>The transcriptional landscape of the mammalian genome.</title>
        <authorList>
            <person name="Carninci P."/>
            <person name="Kasukawa T."/>
            <person name="Katayama S."/>
            <person name="Gough J."/>
            <person name="Frith M.C."/>
            <person name="Maeda N."/>
            <person name="Oyama R."/>
            <person name="Ravasi T."/>
            <person name="Lenhard B."/>
            <person name="Wells C."/>
            <person name="Kodzius R."/>
            <person name="Shimokawa K."/>
            <person name="Bajic V.B."/>
            <person name="Brenner S.E."/>
            <person name="Batalov S."/>
            <person name="Forrest A.R."/>
            <person name="Zavolan M."/>
            <person name="Davis M.J."/>
            <person name="Wilming L.G."/>
            <person name="Aidinis V."/>
            <person name="Allen J.E."/>
            <person name="Ambesi-Impiombato A."/>
            <person name="Apweiler R."/>
            <person name="Aturaliya R.N."/>
            <person name="Bailey T.L."/>
            <person name="Bansal M."/>
            <person name="Baxter L."/>
            <person name="Beisel K.W."/>
            <person name="Bersano T."/>
            <person name="Bono H."/>
            <person name="Chalk A.M."/>
            <person name="Chiu K.P."/>
            <person name="Choudhary V."/>
            <person name="Christoffels A."/>
            <person name="Clutterbuck D.R."/>
            <person name="Crowe M.L."/>
            <person name="Dalla E."/>
            <person name="Dalrymple B.P."/>
            <person name="de Bono B."/>
            <person name="Della Gatta G."/>
            <person name="di Bernardo D."/>
            <person name="Down T."/>
            <person name="Engstrom P."/>
            <person name="Fagiolini M."/>
            <person name="Faulkner G."/>
            <person name="Fletcher C.F."/>
            <person name="Fukushima T."/>
            <person name="Furuno M."/>
            <person name="Futaki S."/>
            <person name="Gariboldi M."/>
            <person name="Georgii-Hemming P."/>
            <person name="Gingeras T.R."/>
            <person name="Gojobori T."/>
            <person name="Green R.E."/>
            <person name="Gustincich S."/>
            <person name="Harbers M."/>
            <person name="Hayashi Y."/>
            <person name="Hensch T.K."/>
            <person name="Hirokawa N."/>
            <person name="Hill D."/>
            <person name="Huminiecki L."/>
            <person name="Iacono M."/>
            <person name="Ikeo K."/>
            <person name="Iwama A."/>
            <person name="Ishikawa T."/>
            <person name="Jakt M."/>
            <person name="Kanapin A."/>
            <person name="Katoh M."/>
            <person name="Kawasawa Y."/>
            <person name="Kelso J."/>
            <person name="Kitamura H."/>
            <person name="Kitano H."/>
            <person name="Kollias G."/>
            <person name="Krishnan S.P."/>
            <person name="Kruger A."/>
            <person name="Kummerfeld S.K."/>
            <person name="Kurochkin I.V."/>
            <person name="Lareau L.F."/>
            <person name="Lazarevic D."/>
            <person name="Lipovich L."/>
            <person name="Liu J."/>
            <person name="Liuni S."/>
            <person name="McWilliam S."/>
            <person name="Madan Babu M."/>
            <person name="Madera M."/>
            <person name="Marchionni L."/>
            <person name="Matsuda H."/>
            <person name="Matsuzawa S."/>
            <person name="Miki H."/>
            <person name="Mignone F."/>
            <person name="Miyake S."/>
            <person name="Morris K."/>
            <person name="Mottagui-Tabar S."/>
            <person name="Mulder N."/>
            <person name="Nakano N."/>
            <person name="Nakauchi H."/>
            <person name="Ng P."/>
            <person name="Nilsson R."/>
            <person name="Nishiguchi S."/>
            <person name="Nishikawa S."/>
            <person name="Nori F."/>
            <person name="Ohara O."/>
            <person name="Okazaki Y."/>
            <person name="Orlando V."/>
            <person name="Pang K.C."/>
            <person name="Pavan W.J."/>
            <person name="Pavesi G."/>
            <person name="Pesole G."/>
            <person name="Petrovsky N."/>
            <person name="Piazza S."/>
            <person name="Reed J."/>
            <person name="Reid J.F."/>
            <person name="Ring B.Z."/>
            <person name="Ringwald M."/>
            <person name="Rost B."/>
            <person name="Ruan Y."/>
            <person name="Salzberg S.L."/>
            <person name="Sandelin A."/>
            <person name="Schneider C."/>
            <person name="Schoenbach C."/>
            <person name="Sekiguchi K."/>
            <person name="Semple C.A."/>
            <person name="Seno S."/>
            <person name="Sessa L."/>
            <person name="Sheng Y."/>
            <person name="Shibata Y."/>
            <person name="Shimada H."/>
            <person name="Shimada K."/>
            <person name="Silva D."/>
            <person name="Sinclair B."/>
            <person name="Sperling S."/>
            <person name="Stupka E."/>
            <person name="Sugiura K."/>
            <person name="Sultana R."/>
            <person name="Takenaka Y."/>
            <person name="Taki K."/>
            <person name="Tammoja K."/>
            <person name="Tan S.L."/>
            <person name="Tang S."/>
            <person name="Taylor M.S."/>
            <person name="Tegner J."/>
            <person name="Teichmann S.A."/>
            <person name="Ueda H.R."/>
            <person name="van Nimwegen E."/>
            <person name="Verardo R."/>
            <person name="Wei C.L."/>
            <person name="Yagi K."/>
            <person name="Yamanishi H."/>
            <person name="Zabarovsky E."/>
            <person name="Zhu S."/>
            <person name="Zimmer A."/>
            <person name="Hide W."/>
            <person name="Bult C."/>
            <person name="Grimmond S.M."/>
            <person name="Teasdale R.D."/>
            <person name="Liu E.T."/>
            <person name="Brusic V."/>
            <person name="Quackenbush J."/>
            <person name="Wahlestedt C."/>
            <person name="Mattick J.S."/>
            <person name="Hume D.A."/>
            <person name="Kai C."/>
            <person name="Sasaki D."/>
            <person name="Tomaru Y."/>
            <person name="Fukuda S."/>
            <person name="Kanamori-Katayama M."/>
            <person name="Suzuki M."/>
            <person name="Aoki J."/>
            <person name="Arakawa T."/>
            <person name="Iida J."/>
            <person name="Imamura K."/>
            <person name="Itoh M."/>
            <person name="Kato T."/>
            <person name="Kawaji H."/>
            <person name="Kawagashira N."/>
            <person name="Kawashima T."/>
            <person name="Kojima M."/>
            <person name="Kondo S."/>
            <person name="Konno H."/>
            <person name="Nakano K."/>
            <person name="Ninomiya N."/>
            <person name="Nishio T."/>
            <person name="Okada M."/>
            <person name="Plessy C."/>
            <person name="Shibata K."/>
            <person name="Shiraki T."/>
            <person name="Suzuki S."/>
            <person name="Tagami M."/>
            <person name="Waki K."/>
            <person name="Watahiki A."/>
            <person name="Okamura-Oho Y."/>
            <person name="Suzuki H."/>
            <person name="Kawai J."/>
            <person name="Hayashizaki Y."/>
        </authorList>
    </citation>
    <scope>NUCLEOTIDE SEQUENCE [LARGE SCALE MRNA]</scope>
    <source>
        <strain>C57BL/6J</strain>
        <tissue>Corpora quadrigemina</tissue>
    </source>
</reference>
<reference evidence="5 6" key="2">
    <citation type="journal article" date="2004" name="Genome Res.">
        <title>The status, quality, and expansion of the NIH full-length cDNA project: the Mammalian Gene Collection (MGC).</title>
        <authorList>
            <consortium name="The MGC Project Team"/>
        </authorList>
    </citation>
    <scope>NUCLEOTIDE SEQUENCE [LARGE SCALE MRNA]</scope>
    <source>
        <strain evidence="6">Czech II</strain>
        <strain evidence="7">FVB/N</strain>
        <tissue evidence="8">Kidney</tissue>
        <tissue evidence="6">Mammary gland</tissue>
    </source>
</reference>
<reference evidence="5" key="3">
    <citation type="journal article" date="2001" name="J. Cell Sci.">
        <title>CHMP1 is a novel nuclear matrix protein affecting chromatin structure and cell-cycle progression.</title>
        <authorList>
            <person name="Stauffer D.R."/>
            <person name="Howard T.L."/>
            <person name="Nyun T."/>
            <person name="Hollenberg S.M."/>
        </authorList>
    </citation>
    <scope>SUBCELLULAR LOCATION</scope>
    <scope>TISSUE SPECIFICITY</scope>
    <scope>INTERACTION WITH PHF1</scope>
</reference>
<feature type="chain" id="PRO_0000211449" description="Charged multivesicular body protein 1a">
    <location>
        <begin position="1"/>
        <end position="196"/>
    </location>
</feature>
<feature type="coiled-coil region" evidence="3">
    <location>
        <begin position="5"/>
        <end position="42"/>
    </location>
</feature>
<feature type="coiled-coil region" evidence="3">
    <location>
        <begin position="102"/>
        <end position="124"/>
    </location>
</feature>
<feature type="short sequence motif" description="MIT-interacting motif">
    <location>
        <begin position="185"/>
        <end position="195"/>
    </location>
</feature>
<feature type="modified residue" description="N-acetylmethionine" evidence="2">
    <location>
        <position position="1"/>
    </location>
</feature>
<feature type="modified residue" description="Phosphoserine" evidence="2">
    <location>
        <position position="101"/>
    </location>
</feature>
<feature type="modified residue" description="Phosphoserine" evidence="2">
    <location>
        <position position="173"/>
    </location>
</feature>